<accession>B7MIX6</accession>
<reference key="1">
    <citation type="journal article" date="2009" name="PLoS Genet.">
        <title>Organised genome dynamics in the Escherichia coli species results in highly diverse adaptive paths.</title>
        <authorList>
            <person name="Touchon M."/>
            <person name="Hoede C."/>
            <person name="Tenaillon O."/>
            <person name="Barbe V."/>
            <person name="Baeriswyl S."/>
            <person name="Bidet P."/>
            <person name="Bingen E."/>
            <person name="Bonacorsi S."/>
            <person name="Bouchier C."/>
            <person name="Bouvet O."/>
            <person name="Calteau A."/>
            <person name="Chiapello H."/>
            <person name="Clermont O."/>
            <person name="Cruveiller S."/>
            <person name="Danchin A."/>
            <person name="Diard M."/>
            <person name="Dossat C."/>
            <person name="Karoui M.E."/>
            <person name="Frapy E."/>
            <person name="Garry L."/>
            <person name="Ghigo J.M."/>
            <person name="Gilles A.M."/>
            <person name="Johnson J."/>
            <person name="Le Bouguenec C."/>
            <person name="Lescat M."/>
            <person name="Mangenot S."/>
            <person name="Martinez-Jehanne V."/>
            <person name="Matic I."/>
            <person name="Nassif X."/>
            <person name="Oztas S."/>
            <person name="Petit M.A."/>
            <person name="Pichon C."/>
            <person name="Rouy Z."/>
            <person name="Ruf C.S."/>
            <person name="Schneider D."/>
            <person name="Tourret J."/>
            <person name="Vacherie B."/>
            <person name="Vallenet D."/>
            <person name="Medigue C."/>
            <person name="Rocha E.P.C."/>
            <person name="Denamur E."/>
        </authorList>
    </citation>
    <scope>NUCLEOTIDE SEQUENCE [LARGE SCALE GENOMIC DNA]</scope>
    <source>
        <strain>S88 / ExPEC</strain>
    </source>
</reference>
<dbReference type="EC" id="2.8.1.10" evidence="1"/>
<dbReference type="EMBL" id="CU928161">
    <property type="protein sequence ID" value="CAR05620.1"/>
    <property type="molecule type" value="Genomic_DNA"/>
</dbReference>
<dbReference type="RefSeq" id="WP_000944055.1">
    <property type="nucleotide sequence ID" value="NC_011742.1"/>
</dbReference>
<dbReference type="SMR" id="B7MIX6"/>
<dbReference type="KEGG" id="ecz:ECS88_4451"/>
<dbReference type="HOGENOM" id="CLU_062233_1_0_6"/>
<dbReference type="UniPathway" id="UPA00060"/>
<dbReference type="Proteomes" id="UP000000747">
    <property type="component" value="Chromosome"/>
</dbReference>
<dbReference type="GO" id="GO:0005737">
    <property type="term" value="C:cytoplasm"/>
    <property type="evidence" value="ECO:0007669"/>
    <property type="project" value="UniProtKB-SubCell"/>
</dbReference>
<dbReference type="GO" id="GO:1990107">
    <property type="term" value="F:thiazole synthase activity"/>
    <property type="evidence" value="ECO:0007669"/>
    <property type="project" value="UniProtKB-EC"/>
</dbReference>
<dbReference type="GO" id="GO:0009229">
    <property type="term" value="P:thiamine diphosphate biosynthetic process"/>
    <property type="evidence" value="ECO:0007669"/>
    <property type="project" value="UniProtKB-UniRule"/>
</dbReference>
<dbReference type="CDD" id="cd04728">
    <property type="entry name" value="ThiG"/>
    <property type="match status" value="1"/>
</dbReference>
<dbReference type="FunFam" id="3.20.20.70:FF:000049">
    <property type="entry name" value="Thiazole synthase"/>
    <property type="match status" value="1"/>
</dbReference>
<dbReference type="Gene3D" id="3.20.20.70">
    <property type="entry name" value="Aldolase class I"/>
    <property type="match status" value="1"/>
</dbReference>
<dbReference type="HAMAP" id="MF_00443">
    <property type="entry name" value="ThiG"/>
    <property type="match status" value="1"/>
</dbReference>
<dbReference type="InterPro" id="IPR013785">
    <property type="entry name" value="Aldolase_TIM"/>
</dbReference>
<dbReference type="InterPro" id="IPR033983">
    <property type="entry name" value="Thiazole_synthase_ThiG"/>
</dbReference>
<dbReference type="InterPro" id="IPR008867">
    <property type="entry name" value="ThiG"/>
</dbReference>
<dbReference type="PANTHER" id="PTHR34266">
    <property type="entry name" value="THIAZOLE SYNTHASE"/>
    <property type="match status" value="1"/>
</dbReference>
<dbReference type="PANTHER" id="PTHR34266:SF2">
    <property type="entry name" value="THIAZOLE SYNTHASE"/>
    <property type="match status" value="1"/>
</dbReference>
<dbReference type="Pfam" id="PF05690">
    <property type="entry name" value="ThiG"/>
    <property type="match status" value="1"/>
</dbReference>
<dbReference type="SUPFAM" id="SSF110399">
    <property type="entry name" value="ThiG-like"/>
    <property type="match status" value="1"/>
</dbReference>
<keyword id="KW-0963">Cytoplasm</keyword>
<keyword id="KW-1185">Reference proteome</keyword>
<keyword id="KW-0704">Schiff base</keyword>
<keyword id="KW-0784">Thiamine biosynthesis</keyword>
<keyword id="KW-0808">Transferase</keyword>
<comment type="function">
    <text evidence="1">Catalyzes the rearrangement of 1-deoxy-D-xylulose 5-phosphate (DXP) to produce the thiazole phosphate moiety of thiamine. Sulfur is provided by the thiocarboxylate moiety of the carrier protein ThiS. In vitro, sulfur can be provided by H(2)S.</text>
</comment>
<comment type="catalytic activity">
    <reaction evidence="1">
        <text>[ThiS sulfur-carrier protein]-C-terminal-Gly-aminoethanethioate + 2-iminoacetate + 1-deoxy-D-xylulose 5-phosphate = [ThiS sulfur-carrier protein]-C-terminal Gly-Gly + 2-[(2R,5Z)-2-carboxy-4-methylthiazol-5(2H)-ylidene]ethyl phosphate + 2 H2O + H(+)</text>
        <dbReference type="Rhea" id="RHEA:26297"/>
        <dbReference type="Rhea" id="RHEA-COMP:12909"/>
        <dbReference type="Rhea" id="RHEA-COMP:19908"/>
        <dbReference type="ChEBI" id="CHEBI:15377"/>
        <dbReference type="ChEBI" id="CHEBI:15378"/>
        <dbReference type="ChEBI" id="CHEBI:57792"/>
        <dbReference type="ChEBI" id="CHEBI:62899"/>
        <dbReference type="ChEBI" id="CHEBI:77846"/>
        <dbReference type="ChEBI" id="CHEBI:90778"/>
        <dbReference type="ChEBI" id="CHEBI:232372"/>
        <dbReference type="EC" id="2.8.1.10"/>
    </reaction>
</comment>
<comment type="pathway">
    <text evidence="1">Cofactor biosynthesis; thiamine diphosphate biosynthesis.</text>
</comment>
<comment type="subunit">
    <text evidence="1">Homotetramer. Forms heterodimers with either ThiH or ThiS.</text>
</comment>
<comment type="subcellular location">
    <subcellularLocation>
        <location evidence="1">Cytoplasm</location>
    </subcellularLocation>
</comment>
<comment type="similarity">
    <text evidence="1">Belongs to the ThiG family.</text>
</comment>
<proteinExistence type="inferred from homology"/>
<organism>
    <name type="scientific">Escherichia coli O45:K1 (strain S88 / ExPEC)</name>
    <dbReference type="NCBI Taxonomy" id="585035"/>
    <lineage>
        <taxon>Bacteria</taxon>
        <taxon>Pseudomonadati</taxon>
        <taxon>Pseudomonadota</taxon>
        <taxon>Gammaproteobacteria</taxon>
        <taxon>Enterobacterales</taxon>
        <taxon>Enterobacteriaceae</taxon>
        <taxon>Escherichia</taxon>
    </lineage>
</organism>
<name>THIG_ECO45</name>
<protein>
    <recommendedName>
        <fullName evidence="1">Thiazole synthase</fullName>
        <ecNumber evidence="1">2.8.1.10</ecNumber>
    </recommendedName>
</protein>
<gene>
    <name evidence="1" type="primary">thiG</name>
    <name type="ordered locus">ECS88_4451</name>
</gene>
<evidence type="ECO:0000255" key="1">
    <source>
        <dbReference type="HAMAP-Rule" id="MF_00443"/>
    </source>
</evidence>
<feature type="chain" id="PRO_1000196859" description="Thiazole synthase">
    <location>
        <begin position="1"/>
        <end position="256"/>
    </location>
</feature>
<feature type="active site" description="Schiff-base intermediate with DXP" evidence="1">
    <location>
        <position position="95"/>
    </location>
</feature>
<feature type="binding site" evidence="1">
    <location>
        <position position="156"/>
    </location>
    <ligand>
        <name>1-deoxy-D-xylulose 5-phosphate</name>
        <dbReference type="ChEBI" id="CHEBI:57792"/>
    </ligand>
</feature>
<feature type="binding site" evidence="1">
    <location>
        <begin position="182"/>
        <end position="183"/>
    </location>
    <ligand>
        <name>1-deoxy-D-xylulose 5-phosphate</name>
        <dbReference type="ChEBI" id="CHEBI:57792"/>
    </ligand>
</feature>
<feature type="binding site" evidence="1">
    <location>
        <begin position="204"/>
        <end position="205"/>
    </location>
    <ligand>
        <name>1-deoxy-D-xylulose 5-phosphate</name>
        <dbReference type="ChEBI" id="CHEBI:57792"/>
    </ligand>
</feature>
<sequence>MLRIADKTFDSHLFTGTGKFASSQLMMEAIRACGSQLVTLAMKRVNLRQHNDAILEPLIAAGVTLLPNTSGAKTAEEAIFAAHLAREALGTNWLKLEIHPDARWLLPDPIETLKAAEKLVQQGFVVLPYCGADPVLCKRLEEVGCAAVMPLGAPIGSNQGLETRAMLEIIIQQATVPVVVDAGIGVPSHAAQALEMGADAVLVNTAIAVADDPVNMAKAFRLAVEAGLLARQSGPGSRSHFAHATSPLTGFLEASE</sequence>